<proteinExistence type="inferred from homology"/>
<keyword id="KW-0378">Hydrolase</keyword>
<organism>
    <name type="scientific">Salmonella heidelberg (strain SL476)</name>
    <dbReference type="NCBI Taxonomy" id="454169"/>
    <lineage>
        <taxon>Bacteria</taxon>
        <taxon>Pseudomonadati</taxon>
        <taxon>Pseudomonadota</taxon>
        <taxon>Gammaproteobacteria</taxon>
        <taxon>Enterobacterales</taxon>
        <taxon>Enterobacteriaceae</taxon>
        <taxon>Salmonella</taxon>
    </lineage>
</organism>
<name>RPPH_SALHS</name>
<dbReference type="EC" id="3.6.1.-" evidence="1"/>
<dbReference type="EMBL" id="CP001120">
    <property type="protein sequence ID" value="ACF68618.1"/>
    <property type="molecule type" value="Genomic_DNA"/>
</dbReference>
<dbReference type="RefSeq" id="WP_000564481.1">
    <property type="nucleotide sequence ID" value="NC_011083.1"/>
</dbReference>
<dbReference type="SMR" id="B4TGQ9"/>
<dbReference type="KEGG" id="seh:SeHA_C3217"/>
<dbReference type="HOGENOM" id="CLU_087195_3_2_6"/>
<dbReference type="Proteomes" id="UP000001866">
    <property type="component" value="Chromosome"/>
</dbReference>
<dbReference type="GO" id="GO:0005737">
    <property type="term" value="C:cytoplasm"/>
    <property type="evidence" value="ECO:0007669"/>
    <property type="project" value="TreeGrafter"/>
</dbReference>
<dbReference type="GO" id="GO:0034353">
    <property type="term" value="F:mRNA 5'-diphosphatase activity"/>
    <property type="evidence" value="ECO:0007669"/>
    <property type="project" value="TreeGrafter"/>
</dbReference>
<dbReference type="GO" id="GO:0006402">
    <property type="term" value="P:mRNA catabolic process"/>
    <property type="evidence" value="ECO:0007669"/>
    <property type="project" value="TreeGrafter"/>
</dbReference>
<dbReference type="CDD" id="cd03671">
    <property type="entry name" value="NUDIX_Ap4A_hydrolase_plant_like"/>
    <property type="match status" value="1"/>
</dbReference>
<dbReference type="FunFam" id="3.90.79.10:FF:000001">
    <property type="entry name" value="RNA pyrophosphohydrolase"/>
    <property type="match status" value="1"/>
</dbReference>
<dbReference type="Gene3D" id="3.90.79.10">
    <property type="entry name" value="Nucleoside Triphosphate Pyrophosphohydrolase"/>
    <property type="match status" value="1"/>
</dbReference>
<dbReference type="HAMAP" id="MF_00298">
    <property type="entry name" value="Nudix_RppH"/>
    <property type="match status" value="1"/>
</dbReference>
<dbReference type="InterPro" id="IPR020476">
    <property type="entry name" value="Nudix_hydrolase"/>
</dbReference>
<dbReference type="InterPro" id="IPR015797">
    <property type="entry name" value="NUDIX_hydrolase-like_dom_sf"/>
</dbReference>
<dbReference type="InterPro" id="IPR020084">
    <property type="entry name" value="NUDIX_hydrolase_CS"/>
</dbReference>
<dbReference type="InterPro" id="IPR000086">
    <property type="entry name" value="NUDIX_hydrolase_dom"/>
</dbReference>
<dbReference type="InterPro" id="IPR022927">
    <property type="entry name" value="RppH"/>
</dbReference>
<dbReference type="NCBIfam" id="NF001934">
    <property type="entry name" value="PRK00714.1-1"/>
    <property type="match status" value="1"/>
</dbReference>
<dbReference type="NCBIfam" id="NF001937">
    <property type="entry name" value="PRK00714.1-4"/>
    <property type="match status" value="1"/>
</dbReference>
<dbReference type="NCBIfam" id="NF001938">
    <property type="entry name" value="PRK00714.1-5"/>
    <property type="match status" value="1"/>
</dbReference>
<dbReference type="PANTHER" id="PTHR23114">
    <property type="entry name" value="M7GPPPN-MRNA HYDROLASE"/>
    <property type="match status" value="1"/>
</dbReference>
<dbReference type="PANTHER" id="PTHR23114:SF17">
    <property type="entry name" value="M7GPPPN-MRNA HYDROLASE"/>
    <property type="match status" value="1"/>
</dbReference>
<dbReference type="Pfam" id="PF00293">
    <property type="entry name" value="NUDIX"/>
    <property type="match status" value="1"/>
</dbReference>
<dbReference type="PRINTS" id="PR00502">
    <property type="entry name" value="NUDIXFAMILY"/>
</dbReference>
<dbReference type="SUPFAM" id="SSF55811">
    <property type="entry name" value="Nudix"/>
    <property type="match status" value="1"/>
</dbReference>
<dbReference type="PROSITE" id="PS51462">
    <property type="entry name" value="NUDIX"/>
    <property type="match status" value="1"/>
</dbReference>
<dbReference type="PROSITE" id="PS00893">
    <property type="entry name" value="NUDIX_BOX"/>
    <property type="match status" value="1"/>
</dbReference>
<gene>
    <name evidence="1" type="primary">rppH</name>
    <name evidence="1" type="synonym">nudH</name>
    <name type="ordered locus">SeHA_C3217</name>
</gene>
<accession>B4TGQ9</accession>
<comment type="function">
    <text evidence="1">Accelerates the degradation of transcripts by removing pyrophosphate from the 5'-end of triphosphorylated RNA, leading to a more labile monophosphorylated state that can stimulate subsequent ribonuclease cleavage.</text>
</comment>
<comment type="cofactor">
    <cofactor evidence="1">
        <name>a divalent metal cation</name>
        <dbReference type="ChEBI" id="CHEBI:60240"/>
    </cofactor>
</comment>
<comment type="similarity">
    <text evidence="1">Belongs to the Nudix hydrolase family. RppH subfamily.</text>
</comment>
<evidence type="ECO:0000255" key="1">
    <source>
        <dbReference type="HAMAP-Rule" id="MF_00298"/>
    </source>
</evidence>
<reference key="1">
    <citation type="journal article" date="2011" name="J. Bacteriol.">
        <title>Comparative genomics of 28 Salmonella enterica isolates: evidence for CRISPR-mediated adaptive sublineage evolution.</title>
        <authorList>
            <person name="Fricke W.F."/>
            <person name="Mammel M.K."/>
            <person name="McDermott P.F."/>
            <person name="Tartera C."/>
            <person name="White D.G."/>
            <person name="Leclerc J.E."/>
            <person name="Ravel J."/>
            <person name="Cebula T.A."/>
        </authorList>
    </citation>
    <scope>NUCLEOTIDE SEQUENCE [LARGE SCALE GENOMIC DNA]</scope>
    <source>
        <strain>SL476</strain>
    </source>
</reference>
<feature type="chain" id="PRO_1000115295" description="RNA pyrophosphohydrolase">
    <location>
        <begin position="1"/>
        <end position="176"/>
    </location>
</feature>
<feature type="domain" description="Nudix hydrolase" evidence="1">
    <location>
        <begin position="6"/>
        <end position="149"/>
    </location>
</feature>
<feature type="short sequence motif" description="Nudix box">
    <location>
        <begin position="38"/>
        <end position="59"/>
    </location>
</feature>
<sequence length="176" mass="20806">MIDDDGYRPNVGIVICNRQGQVMWARRFGQHSWQFPQGGINPGESAEQAMYRELFEEVGLSRKDVRILASTRNWLRYKLPKRLVRWDTKPVCIGQKQKWFLLQLMSADAEINMQTSSTPEFDGWRWVSYWYPVRQVVSFKRDVYRRVMKEFASVVMALQDNPPKLQSAPAYRRKRG</sequence>
<protein>
    <recommendedName>
        <fullName evidence="1">RNA pyrophosphohydrolase</fullName>
        <ecNumber evidence="1">3.6.1.-</ecNumber>
    </recommendedName>
    <alternativeName>
        <fullName evidence="1">(Di)nucleoside polyphosphate hydrolase</fullName>
    </alternativeName>
</protein>